<sequence length="146" mass="15977">MGEVRRPDRVAEAIREEVATFLSEGAKDPRIRAFVTVTAVEVTRDLRHATVFVSLMGDDADKKSTTAGLASVASHLRSQLGKSLRLRSAPEIHFRTDESVARASRIEHLLAKIRDEREAQEPAQDPAQDSSQDASVEASDAPDKAE</sequence>
<accession>C1A8N9</accession>
<organism>
    <name type="scientific">Gemmatimonas aurantiaca (strain DSM 14586 / JCM 11422 / NBRC 100505 / T-27)</name>
    <dbReference type="NCBI Taxonomy" id="379066"/>
    <lineage>
        <taxon>Bacteria</taxon>
        <taxon>Pseudomonadati</taxon>
        <taxon>Gemmatimonadota</taxon>
        <taxon>Gemmatimonadia</taxon>
        <taxon>Gemmatimonadales</taxon>
        <taxon>Gemmatimonadaceae</taxon>
        <taxon>Gemmatimonas</taxon>
    </lineage>
</organism>
<reference key="1">
    <citation type="submission" date="2006-03" db="EMBL/GenBank/DDBJ databases">
        <title>Complete genome sequence of Gemmatimonas aurantiaca T-27 that represents a novel phylum Gemmatimonadetes.</title>
        <authorList>
            <person name="Takasaki K."/>
            <person name="Ichikawa N."/>
            <person name="Miura H."/>
            <person name="Matsushita S."/>
            <person name="Watanabe Y."/>
            <person name="Oguchi A."/>
            <person name="Ankai A."/>
            <person name="Yashiro I."/>
            <person name="Takahashi M."/>
            <person name="Terui Y."/>
            <person name="Fukui S."/>
            <person name="Yokoyama H."/>
            <person name="Tanikawa S."/>
            <person name="Hanada S."/>
            <person name="Kamagata Y."/>
            <person name="Fujita N."/>
        </authorList>
    </citation>
    <scope>NUCLEOTIDE SEQUENCE [LARGE SCALE GENOMIC DNA]</scope>
    <source>
        <strain>DSM 14586 / JCM 11422 / NBRC 100505 / T-27</strain>
    </source>
</reference>
<protein>
    <recommendedName>
        <fullName evidence="1">Ribosome-binding factor A</fullName>
    </recommendedName>
</protein>
<evidence type="ECO:0000255" key="1">
    <source>
        <dbReference type="HAMAP-Rule" id="MF_00003"/>
    </source>
</evidence>
<evidence type="ECO:0000256" key="2">
    <source>
        <dbReference type="SAM" id="MobiDB-lite"/>
    </source>
</evidence>
<dbReference type="EMBL" id="AP009153">
    <property type="protein sequence ID" value="BAH38599.1"/>
    <property type="molecule type" value="Genomic_DNA"/>
</dbReference>
<dbReference type="RefSeq" id="WP_012683046.1">
    <property type="nucleotide sequence ID" value="NC_012489.1"/>
</dbReference>
<dbReference type="SMR" id="C1A8N9"/>
<dbReference type="STRING" id="379066.GAU_1557"/>
<dbReference type="KEGG" id="gau:GAU_1557"/>
<dbReference type="eggNOG" id="COG0858">
    <property type="taxonomic scope" value="Bacteria"/>
</dbReference>
<dbReference type="HOGENOM" id="CLU_089475_5_0_0"/>
<dbReference type="OrthoDB" id="307788at2"/>
<dbReference type="Proteomes" id="UP000002209">
    <property type="component" value="Chromosome"/>
</dbReference>
<dbReference type="GO" id="GO:0005829">
    <property type="term" value="C:cytosol"/>
    <property type="evidence" value="ECO:0007669"/>
    <property type="project" value="TreeGrafter"/>
</dbReference>
<dbReference type="GO" id="GO:0043024">
    <property type="term" value="F:ribosomal small subunit binding"/>
    <property type="evidence" value="ECO:0007669"/>
    <property type="project" value="TreeGrafter"/>
</dbReference>
<dbReference type="GO" id="GO:0030490">
    <property type="term" value="P:maturation of SSU-rRNA"/>
    <property type="evidence" value="ECO:0007669"/>
    <property type="project" value="UniProtKB-UniRule"/>
</dbReference>
<dbReference type="Gene3D" id="3.30.300.20">
    <property type="match status" value="1"/>
</dbReference>
<dbReference type="HAMAP" id="MF_00003">
    <property type="entry name" value="RbfA"/>
    <property type="match status" value="1"/>
</dbReference>
<dbReference type="InterPro" id="IPR015946">
    <property type="entry name" value="KH_dom-like_a/b"/>
</dbReference>
<dbReference type="InterPro" id="IPR000238">
    <property type="entry name" value="RbfA"/>
</dbReference>
<dbReference type="InterPro" id="IPR023799">
    <property type="entry name" value="RbfA_dom_sf"/>
</dbReference>
<dbReference type="InterPro" id="IPR020053">
    <property type="entry name" value="Ribosome-bd_factorA_CS"/>
</dbReference>
<dbReference type="NCBIfam" id="TIGR00082">
    <property type="entry name" value="rbfA"/>
    <property type="match status" value="1"/>
</dbReference>
<dbReference type="PANTHER" id="PTHR33515">
    <property type="entry name" value="RIBOSOME-BINDING FACTOR A, CHLOROPLASTIC-RELATED"/>
    <property type="match status" value="1"/>
</dbReference>
<dbReference type="PANTHER" id="PTHR33515:SF1">
    <property type="entry name" value="RIBOSOME-BINDING FACTOR A, CHLOROPLASTIC-RELATED"/>
    <property type="match status" value="1"/>
</dbReference>
<dbReference type="Pfam" id="PF02033">
    <property type="entry name" value="RBFA"/>
    <property type="match status" value="1"/>
</dbReference>
<dbReference type="SUPFAM" id="SSF89919">
    <property type="entry name" value="Ribosome-binding factor A, RbfA"/>
    <property type="match status" value="1"/>
</dbReference>
<dbReference type="PROSITE" id="PS01319">
    <property type="entry name" value="RBFA"/>
    <property type="match status" value="1"/>
</dbReference>
<keyword id="KW-0963">Cytoplasm</keyword>
<keyword id="KW-1185">Reference proteome</keyword>
<keyword id="KW-0690">Ribosome biogenesis</keyword>
<comment type="function">
    <text evidence="1">One of several proteins that assist in the late maturation steps of the functional core of the 30S ribosomal subunit. Associates with free 30S ribosomal subunits (but not with 30S subunits that are part of 70S ribosomes or polysomes). Required for efficient processing of 16S rRNA. May interact with the 5'-terminal helix region of 16S rRNA.</text>
</comment>
<comment type="subunit">
    <text evidence="1">Monomer. Binds 30S ribosomal subunits, but not 50S ribosomal subunits or 70S ribosomes.</text>
</comment>
<comment type="subcellular location">
    <subcellularLocation>
        <location evidence="1">Cytoplasm</location>
    </subcellularLocation>
</comment>
<comment type="similarity">
    <text evidence="1">Belongs to the RbfA family.</text>
</comment>
<proteinExistence type="inferred from homology"/>
<feature type="chain" id="PRO_1000201633" description="Ribosome-binding factor A">
    <location>
        <begin position="1"/>
        <end position="146"/>
    </location>
</feature>
<feature type="region of interest" description="Disordered" evidence="2">
    <location>
        <begin position="113"/>
        <end position="146"/>
    </location>
</feature>
<gene>
    <name evidence="1" type="primary">rbfA</name>
    <name type="ordered locus">GAU_1557</name>
</gene>
<name>RBFA_GEMAT</name>